<reference key="1">
    <citation type="journal article" date="2004" name="Nature">
        <title>The DNA sequence and comparative analysis of human chromosome 10.</title>
        <authorList>
            <person name="Deloukas P."/>
            <person name="Earthrowl M.E."/>
            <person name="Grafham D.V."/>
            <person name="Rubenfield M."/>
            <person name="French L."/>
            <person name="Steward C.A."/>
            <person name="Sims S.K."/>
            <person name="Jones M.C."/>
            <person name="Searle S."/>
            <person name="Scott C."/>
            <person name="Howe K."/>
            <person name="Hunt S.E."/>
            <person name="Andrews T.D."/>
            <person name="Gilbert J.G.R."/>
            <person name="Swarbreck D."/>
            <person name="Ashurst J.L."/>
            <person name="Taylor A."/>
            <person name="Battles J."/>
            <person name="Bird C.P."/>
            <person name="Ainscough R."/>
            <person name="Almeida J.P."/>
            <person name="Ashwell R.I.S."/>
            <person name="Ambrose K.D."/>
            <person name="Babbage A.K."/>
            <person name="Bagguley C.L."/>
            <person name="Bailey J."/>
            <person name="Banerjee R."/>
            <person name="Bates K."/>
            <person name="Beasley H."/>
            <person name="Bray-Allen S."/>
            <person name="Brown A.J."/>
            <person name="Brown J.Y."/>
            <person name="Burford D.C."/>
            <person name="Burrill W."/>
            <person name="Burton J."/>
            <person name="Cahill P."/>
            <person name="Camire D."/>
            <person name="Carter N.P."/>
            <person name="Chapman J.C."/>
            <person name="Clark S.Y."/>
            <person name="Clarke G."/>
            <person name="Clee C.M."/>
            <person name="Clegg S."/>
            <person name="Corby N."/>
            <person name="Coulson A."/>
            <person name="Dhami P."/>
            <person name="Dutta I."/>
            <person name="Dunn M."/>
            <person name="Faulkner L."/>
            <person name="Frankish A."/>
            <person name="Frankland J.A."/>
            <person name="Garner P."/>
            <person name="Garnett J."/>
            <person name="Gribble S."/>
            <person name="Griffiths C."/>
            <person name="Grocock R."/>
            <person name="Gustafson E."/>
            <person name="Hammond S."/>
            <person name="Harley J.L."/>
            <person name="Hart E."/>
            <person name="Heath P.D."/>
            <person name="Ho T.P."/>
            <person name="Hopkins B."/>
            <person name="Horne J."/>
            <person name="Howden P.J."/>
            <person name="Huckle E."/>
            <person name="Hynds C."/>
            <person name="Johnson C."/>
            <person name="Johnson D."/>
            <person name="Kana A."/>
            <person name="Kay M."/>
            <person name="Kimberley A.M."/>
            <person name="Kershaw J.K."/>
            <person name="Kokkinaki M."/>
            <person name="Laird G.K."/>
            <person name="Lawlor S."/>
            <person name="Lee H.M."/>
            <person name="Leongamornlert D.A."/>
            <person name="Laird G."/>
            <person name="Lloyd C."/>
            <person name="Lloyd D.M."/>
            <person name="Loveland J."/>
            <person name="Lovell J."/>
            <person name="McLaren S."/>
            <person name="McLay K.E."/>
            <person name="McMurray A."/>
            <person name="Mashreghi-Mohammadi M."/>
            <person name="Matthews L."/>
            <person name="Milne S."/>
            <person name="Nickerson T."/>
            <person name="Nguyen M."/>
            <person name="Overton-Larty E."/>
            <person name="Palmer S.A."/>
            <person name="Pearce A.V."/>
            <person name="Peck A.I."/>
            <person name="Pelan S."/>
            <person name="Phillimore B."/>
            <person name="Porter K."/>
            <person name="Rice C.M."/>
            <person name="Rogosin A."/>
            <person name="Ross M.T."/>
            <person name="Sarafidou T."/>
            <person name="Sehra H.K."/>
            <person name="Shownkeen R."/>
            <person name="Skuce C.D."/>
            <person name="Smith M."/>
            <person name="Standring L."/>
            <person name="Sycamore N."/>
            <person name="Tester J."/>
            <person name="Thorpe A."/>
            <person name="Torcasso W."/>
            <person name="Tracey A."/>
            <person name="Tromans A."/>
            <person name="Tsolas J."/>
            <person name="Wall M."/>
            <person name="Walsh J."/>
            <person name="Wang H."/>
            <person name="Weinstock K."/>
            <person name="West A.P."/>
            <person name="Willey D.L."/>
            <person name="Whitehead S.L."/>
            <person name="Wilming L."/>
            <person name="Wray P.W."/>
            <person name="Young L."/>
            <person name="Chen Y."/>
            <person name="Lovering R.C."/>
            <person name="Moschonas N.K."/>
            <person name="Siebert R."/>
            <person name="Fechtel K."/>
            <person name="Bentley D."/>
            <person name="Durbin R.M."/>
            <person name="Hubbard T."/>
            <person name="Doucette-Stamm L."/>
            <person name="Beck S."/>
            <person name="Smith D.R."/>
            <person name="Rogers J."/>
        </authorList>
    </citation>
    <scope>NUCLEOTIDE SEQUENCE [LARGE SCALE GENOMIC DNA]</scope>
</reference>
<reference key="2">
    <citation type="journal article" date="2004" name="Genome Res.">
        <title>The status, quality, and expansion of the NIH full-length cDNA project: the Mammalian Gene Collection (MGC).</title>
        <authorList>
            <consortium name="The MGC Project Team"/>
        </authorList>
    </citation>
    <scope>NUCLEOTIDE SEQUENCE [LARGE SCALE MRNA]</scope>
</reference>
<protein>
    <recommendedName>
        <fullName>Arf-GAP with GTPase, ANK repeat and PH domain-containing protein 5</fullName>
        <shortName>AGAP-5</shortName>
    </recommendedName>
    <alternativeName>
        <fullName>Centaurin-gamma-like family member 2</fullName>
    </alternativeName>
</protein>
<keyword id="KW-0040">ANK repeat</keyword>
<keyword id="KW-0343">GTPase activation</keyword>
<keyword id="KW-0479">Metal-binding</keyword>
<keyword id="KW-1185">Reference proteome</keyword>
<keyword id="KW-0677">Repeat</keyword>
<keyword id="KW-0862">Zinc</keyword>
<keyword id="KW-0863">Zinc-finger</keyword>
<comment type="function">
    <text evidence="4">Putative GTPase-activating protein.</text>
</comment>
<comment type="miscellaneous">
    <text>Encoded by one of the numerous copies of centaurin gamma-like genes clustered in the q11 region of chromosome 10.</text>
</comment>
<comment type="similarity">
    <text evidence="4">Belongs to the centaurin gamma-like family.</text>
</comment>
<name>AGAP5_HUMAN</name>
<feature type="chain" id="PRO_0000349205" description="Arf-GAP with GTPase, ANK repeat and PH domain-containing protein 5">
    <location>
        <begin position="1"/>
        <end position="686"/>
    </location>
</feature>
<feature type="domain" description="PH" evidence="1">
    <location>
        <begin position="282"/>
        <end position="443"/>
    </location>
</feature>
<feature type="domain" description="Arf-GAP" evidence="2">
    <location>
        <begin position="464"/>
        <end position="584"/>
    </location>
</feature>
<feature type="repeat" description="ANK 1">
    <location>
        <begin position="623"/>
        <end position="652"/>
    </location>
</feature>
<feature type="repeat" description="ANK 2">
    <location>
        <begin position="656"/>
        <end position="685"/>
    </location>
</feature>
<feature type="zinc finger region" description="C4-type; degenerate" evidence="2">
    <location>
        <begin position="479"/>
        <end position="502"/>
    </location>
</feature>
<feature type="region of interest" description="Disordered" evidence="3">
    <location>
        <begin position="205"/>
        <end position="242"/>
    </location>
</feature>
<feature type="region of interest" description="Disordered" evidence="3">
    <location>
        <begin position="256"/>
        <end position="278"/>
    </location>
</feature>
<feature type="region of interest" description="Disordered" evidence="3">
    <location>
        <begin position="382"/>
        <end position="404"/>
    </location>
</feature>
<feature type="compositionally biased region" description="Low complexity" evidence="3">
    <location>
        <begin position="211"/>
        <end position="225"/>
    </location>
</feature>
<feature type="compositionally biased region" description="Polar residues" evidence="3">
    <location>
        <begin position="226"/>
        <end position="241"/>
    </location>
</feature>
<feature type="compositionally biased region" description="Basic and acidic residues" evidence="3">
    <location>
        <begin position="258"/>
        <end position="273"/>
    </location>
</feature>
<feature type="sequence conflict" description="In Ref. 2; BC127746." evidence="4" ref="2">
    <original>C</original>
    <variation>R</variation>
    <location>
        <position position="8"/>
    </location>
</feature>
<feature type="sequence conflict" description="In Ref. 2; BC127746." evidence="4" ref="2">
    <original>K</original>
    <variation>E</variation>
    <location>
        <position position="365"/>
    </location>
</feature>
<feature type="sequence conflict" description="In Ref. 2; BC127746." evidence="4" ref="2">
    <original>Y</original>
    <variation>C</variation>
    <location>
        <position position="482"/>
    </location>
</feature>
<proteinExistence type="evidence at transcript level"/>
<gene>
    <name type="primary">AGAP5</name>
    <name type="synonym">CTGLF2</name>
</gene>
<sequence length="686" mass="75492">MGNILTCCVHPSVSLEFDQQQGSVCPSESEIYEAGAGDRMAGAPMAAAVQPAEVTVEVGEDLHMHHIRDQEMPEALEFSLSANPEASTIFQRNSQTDALEFNPSANPEASTIFQRNSQTDVVEIRRSNCTNHVSTERFSQQYSSCSTIFLDDSTASQHYLTMTIISVTLEIPHHITQRDADRSLSIPDEQLHSFAVSTVHITKNRNGGGSLNNYSSSIPSTPSTSQEDPQFSVPPTANTPTPVCKRSMRWSNLFTSEKGSHPDKERKAPENHADTIGSGRAIPIKQGMLLKRSGKWLKTWKKKYVTLCSNGVLTYYSSLGDYMKNIHKKEIDLRTSTIKVPGKWPSLATSACAPISSSKSNGLSKDMDTGLGDSICFSPSISSTTSPKLNPPPSPHANKKKHLKKKSTNNFMIVSATGQTWHFEATTYEERDAWVQAIQSQILASLQSCESSKSKSQLTSQSEAMALQSIQNMRGNAHCVDYETQNPKWASLNLGVLMCIECSGIHRSLGTRLSRVRSLELDDWPVELRKVMSSIGNDLANSIWEGSSQGQTKPSVKSTREEKERWIRSKYEEKLFLAPLPCTELSLGQHLLRATADEDLQTAILLLAHGSREEVNETCGEGDGCTALHLACRKGNVVLAQLLIWYGVDVMARDAHGNTALTYARQASSQECINVLLQYGCPDECV</sequence>
<organism>
    <name type="scientific">Homo sapiens</name>
    <name type="common">Human</name>
    <dbReference type="NCBI Taxonomy" id="9606"/>
    <lineage>
        <taxon>Eukaryota</taxon>
        <taxon>Metazoa</taxon>
        <taxon>Chordata</taxon>
        <taxon>Craniata</taxon>
        <taxon>Vertebrata</taxon>
        <taxon>Euteleostomi</taxon>
        <taxon>Mammalia</taxon>
        <taxon>Eutheria</taxon>
        <taxon>Euarchontoglires</taxon>
        <taxon>Primates</taxon>
        <taxon>Haplorrhini</taxon>
        <taxon>Catarrhini</taxon>
        <taxon>Hominidae</taxon>
        <taxon>Homo</taxon>
    </lineage>
</organism>
<accession>A6NIR3</accession>
<accession>A8MSN5</accession>
<dbReference type="EMBL" id="AC073389">
    <property type="status" value="NOT_ANNOTATED_CDS"/>
    <property type="molecule type" value="Genomic_DNA"/>
</dbReference>
<dbReference type="EMBL" id="AC022400">
    <property type="status" value="NOT_ANNOTATED_CDS"/>
    <property type="molecule type" value="Genomic_DNA"/>
</dbReference>
<dbReference type="EMBL" id="BC127746">
    <property type="status" value="NOT_ANNOTATED_CDS"/>
    <property type="molecule type" value="mRNA"/>
</dbReference>
<dbReference type="CCDS" id="CCDS44439.1"/>
<dbReference type="RefSeq" id="NP_001137472.1">
    <property type="nucleotide sequence ID" value="NM_001144000.4"/>
</dbReference>
<dbReference type="SMR" id="A6NIR3"/>
<dbReference type="BioGRID" id="609497">
    <property type="interactions" value="5"/>
</dbReference>
<dbReference type="FunCoup" id="A6NIR3">
    <property type="interactions" value="261"/>
</dbReference>
<dbReference type="IntAct" id="A6NIR3">
    <property type="interactions" value="2"/>
</dbReference>
<dbReference type="MINT" id="A6NIR3"/>
<dbReference type="STRING" id="9606.ENSP00000363207"/>
<dbReference type="GlyGen" id="A6NIR3">
    <property type="glycosylation" value="2 sites, 1 O-linked glycan (1 site)"/>
</dbReference>
<dbReference type="iPTMnet" id="A6NIR3"/>
<dbReference type="PhosphoSitePlus" id="A6NIR3"/>
<dbReference type="BioMuta" id="AGAP5"/>
<dbReference type="jPOST" id="A6NIR3"/>
<dbReference type="MassIVE" id="A6NIR3"/>
<dbReference type="PaxDb" id="9606-ENSP00000363207"/>
<dbReference type="PeptideAtlas" id="A6NIR3"/>
<dbReference type="ProteomicsDB" id="1279"/>
<dbReference type="Antibodypedia" id="68077">
    <property type="antibodies" value="41 antibodies from 5 providers"/>
</dbReference>
<dbReference type="DNASU" id="729092"/>
<dbReference type="Ensembl" id="ENST00000374094.9">
    <property type="protein sequence ID" value="ENSP00000363207.4"/>
    <property type="gene ID" value="ENSG00000172650.15"/>
</dbReference>
<dbReference type="GeneID" id="729092"/>
<dbReference type="KEGG" id="hsa:729092"/>
<dbReference type="MANE-Select" id="ENST00000374094.9">
    <property type="protein sequence ID" value="ENSP00000363207.4"/>
    <property type="RefSeq nucleotide sequence ID" value="NM_001144000.4"/>
    <property type="RefSeq protein sequence ID" value="NP_001137472.1"/>
</dbReference>
<dbReference type="UCSC" id="uc009xri.4">
    <property type="organism name" value="human"/>
</dbReference>
<dbReference type="AGR" id="HGNC:23467"/>
<dbReference type="CTD" id="729092"/>
<dbReference type="DisGeNET" id="729092"/>
<dbReference type="GeneCards" id="AGAP5"/>
<dbReference type="HGNC" id="HGNC:23467">
    <property type="gene designation" value="AGAP5"/>
</dbReference>
<dbReference type="HPA" id="ENSG00000172650">
    <property type="expression patterns" value="Low tissue specificity"/>
</dbReference>
<dbReference type="neXtProt" id="NX_A6NIR3"/>
<dbReference type="PharmGKB" id="PA164715123"/>
<dbReference type="VEuPathDB" id="HostDB:ENSG00000172650"/>
<dbReference type="eggNOG" id="KOG0705">
    <property type="taxonomic scope" value="Eukaryota"/>
</dbReference>
<dbReference type="GeneTree" id="ENSGT00940000163475"/>
<dbReference type="InParanoid" id="A6NIR3"/>
<dbReference type="OMA" id="PNISHRD"/>
<dbReference type="OrthoDB" id="6136903at2759"/>
<dbReference type="PAN-GO" id="A6NIR3">
    <property type="GO annotations" value="3 GO annotations based on evolutionary models"/>
</dbReference>
<dbReference type="PhylomeDB" id="A6NIR3"/>
<dbReference type="TreeFam" id="TF317762"/>
<dbReference type="PathwayCommons" id="A6NIR3"/>
<dbReference type="SignaLink" id="A6NIR3"/>
<dbReference type="BioGRID-ORCS" id="729092">
    <property type="hits" value="317 hits in 1046 CRISPR screens"/>
</dbReference>
<dbReference type="GenomeRNAi" id="729092"/>
<dbReference type="Pharos" id="A6NIR3">
    <property type="development level" value="Tdark"/>
</dbReference>
<dbReference type="PRO" id="PR:A6NIR3"/>
<dbReference type="Proteomes" id="UP000005640">
    <property type="component" value="Chromosome 10"/>
</dbReference>
<dbReference type="RNAct" id="A6NIR3">
    <property type="molecule type" value="protein"/>
</dbReference>
<dbReference type="Bgee" id="ENSG00000172650">
    <property type="expression patterns" value="Expressed in body of pancreas and 95 other cell types or tissues"/>
</dbReference>
<dbReference type="ExpressionAtlas" id="A6NIR3">
    <property type="expression patterns" value="baseline and differential"/>
</dbReference>
<dbReference type="GO" id="GO:0005096">
    <property type="term" value="F:GTPase activator activity"/>
    <property type="evidence" value="ECO:0000318"/>
    <property type="project" value="GO_Central"/>
</dbReference>
<dbReference type="GO" id="GO:0003924">
    <property type="term" value="F:GTPase activity"/>
    <property type="evidence" value="ECO:0000318"/>
    <property type="project" value="GO_Central"/>
</dbReference>
<dbReference type="GO" id="GO:0008270">
    <property type="term" value="F:zinc ion binding"/>
    <property type="evidence" value="ECO:0007669"/>
    <property type="project" value="UniProtKB-KW"/>
</dbReference>
<dbReference type="CDD" id="cd08853">
    <property type="entry name" value="ArfGap_AGAP2"/>
    <property type="match status" value="1"/>
</dbReference>
<dbReference type="CDD" id="cd01250">
    <property type="entry name" value="PH_AGAP"/>
    <property type="match status" value="1"/>
</dbReference>
<dbReference type="FunFam" id="1.10.220.150:FF:000001">
    <property type="entry name" value="Arf-GAP with GTPase, ANK repeat and PH domain-containing protein 1"/>
    <property type="match status" value="1"/>
</dbReference>
<dbReference type="FunFam" id="1.25.40.20:FF:000027">
    <property type="entry name" value="Arf-GAP with GTPase, ANK repeat and PH domain-containing protein 1"/>
    <property type="match status" value="1"/>
</dbReference>
<dbReference type="Gene3D" id="1.25.40.20">
    <property type="entry name" value="Ankyrin repeat-containing domain"/>
    <property type="match status" value="1"/>
</dbReference>
<dbReference type="Gene3D" id="1.10.220.150">
    <property type="entry name" value="Arf GTPase activating protein"/>
    <property type="match status" value="1"/>
</dbReference>
<dbReference type="Gene3D" id="2.30.29.30">
    <property type="entry name" value="Pleckstrin-homology domain (PH domain)/Phosphotyrosine-binding domain (PTB)"/>
    <property type="match status" value="1"/>
</dbReference>
<dbReference type="InterPro" id="IPR002110">
    <property type="entry name" value="Ankyrin_rpt"/>
</dbReference>
<dbReference type="InterPro" id="IPR036770">
    <property type="entry name" value="Ankyrin_rpt-contain_sf"/>
</dbReference>
<dbReference type="InterPro" id="IPR051282">
    <property type="entry name" value="Arf-GAP_GTPase_ANK_PH"/>
</dbReference>
<dbReference type="InterPro" id="IPR037278">
    <property type="entry name" value="ARFGAP/RecO"/>
</dbReference>
<dbReference type="InterPro" id="IPR001164">
    <property type="entry name" value="ArfGAP_dom"/>
</dbReference>
<dbReference type="InterPro" id="IPR038508">
    <property type="entry name" value="ArfGAP_dom_sf"/>
</dbReference>
<dbReference type="InterPro" id="IPR011993">
    <property type="entry name" value="PH-like_dom_sf"/>
</dbReference>
<dbReference type="InterPro" id="IPR001849">
    <property type="entry name" value="PH_domain"/>
</dbReference>
<dbReference type="PANTHER" id="PTHR45819:SF7">
    <property type="entry name" value="ARF-GAP WITH GTPASE, ANK REPEAT AND PH DOMAIN-CONTAINING PROTEIN 4-RELATED"/>
    <property type="match status" value="1"/>
</dbReference>
<dbReference type="PANTHER" id="PTHR45819">
    <property type="entry name" value="CENTAURIN-GAMMA-1A"/>
    <property type="match status" value="1"/>
</dbReference>
<dbReference type="Pfam" id="PF12796">
    <property type="entry name" value="Ank_2"/>
    <property type="match status" value="1"/>
</dbReference>
<dbReference type="Pfam" id="PF01412">
    <property type="entry name" value="ArfGap"/>
    <property type="match status" value="1"/>
</dbReference>
<dbReference type="PRINTS" id="PR00405">
    <property type="entry name" value="REVINTRACTNG"/>
</dbReference>
<dbReference type="SMART" id="SM00248">
    <property type="entry name" value="ANK"/>
    <property type="match status" value="2"/>
</dbReference>
<dbReference type="SMART" id="SM00105">
    <property type="entry name" value="ArfGap"/>
    <property type="match status" value="1"/>
</dbReference>
<dbReference type="SMART" id="SM00233">
    <property type="entry name" value="PH"/>
    <property type="match status" value="1"/>
</dbReference>
<dbReference type="SUPFAM" id="SSF48403">
    <property type="entry name" value="Ankyrin repeat"/>
    <property type="match status" value="1"/>
</dbReference>
<dbReference type="SUPFAM" id="SSF57863">
    <property type="entry name" value="ArfGap/RecO-like zinc finger"/>
    <property type="match status" value="1"/>
</dbReference>
<dbReference type="SUPFAM" id="SSF50729">
    <property type="entry name" value="PH domain-like"/>
    <property type="match status" value="1"/>
</dbReference>
<dbReference type="PROSITE" id="PS50297">
    <property type="entry name" value="ANK_REP_REGION"/>
    <property type="match status" value="1"/>
</dbReference>
<dbReference type="PROSITE" id="PS50088">
    <property type="entry name" value="ANK_REPEAT"/>
    <property type="match status" value="1"/>
</dbReference>
<dbReference type="PROSITE" id="PS50115">
    <property type="entry name" value="ARFGAP"/>
    <property type="match status" value="1"/>
</dbReference>
<dbReference type="PROSITE" id="PS50003">
    <property type="entry name" value="PH_DOMAIN"/>
    <property type="match status" value="1"/>
</dbReference>
<evidence type="ECO:0000255" key="1">
    <source>
        <dbReference type="PROSITE-ProRule" id="PRU00145"/>
    </source>
</evidence>
<evidence type="ECO:0000255" key="2">
    <source>
        <dbReference type="PROSITE-ProRule" id="PRU00288"/>
    </source>
</evidence>
<evidence type="ECO:0000256" key="3">
    <source>
        <dbReference type="SAM" id="MobiDB-lite"/>
    </source>
</evidence>
<evidence type="ECO:0000305" key="4"/>